<keyword id="KW-0067">ATP-binding</keyword>
<keyword id="KW-0235">DNA replication</keyword>
<keyword id="KW-0547">Nucleotide-binding</keyword>
<keyword id="KW-1185">Reference proteome</keyword>
<organism>
    <name type="scientific">Haloarcula marismortui (strain ATCC 43049 / DSM 3752 / JCM 8966 / VKM B-1809)</name>
    <name type="common">Halobacterium marismortui</name>
    <dbReference type="NCBI Taxonomy" id="272569"/>
    <lineage>
        <taxon>Archaea</taxon>
        <taxon>Methanobacteriati</taxon>
        <taxon>Methanobacteriota</taxon>
        <taxon>Stenosarchaea group</taxon>
        <taxon>Halobacteria</taxon>
        <taxon>Halobacteriales</taxon>
        <taxon>Haloarculaceae</taxon>
        <taxon>Haloarcula</taxon>
    </lineage>
</organism>
<gene>
    <name type="primary">cdc6d</name>
    <name type="ordered locus">rrnAC2711</name>
</gene>
<sequence>MTDKSNNPAPASDPSTTETSNDADGSDGQLDAETDPGTSTGPSDLDDVILDNLDAGSDDPSDEASRGLFDDLLEGEPIFENKEVLRPSYTPHKLPHREEQINNMATILVTALRGDTPSNILIYGKTGTGKTASAKFVSEELETTSQKYEVPCEVEYINCEVTDTQYRVLAQLANKFIDKNAQLIDDRIAELEELQSQARENTAALEETAFGSLDDVEAEIESLEADKSEFEEVPMTGWPTDRVYSSFFDAVDYHERVVVIMLDEIDKLVEKSGDDTLYNLSRMNSELENSRVSIMGISNDLKFTDFLDPRVKSSLGEEEIVFPPYDANQLRDILQARSDVAFKGDALTEDVIPLCAAFAAQEHGDARRALDLLRTAGELAERDQTDNVLEDHVRQAQEKIELDRVVEVVRTLPTQSKIVLFAIILLEKNGVHNINTGEVFNIYKNLCEEIDADILTQRRVTDLISELDMLGIVNAVVVSKGRYGRTKEISLSVPTEETEAVLLSDSRLGDIDDVQPFVQARFDN</sequence>
<feature type="chain" id="PRO_0000150987" description="ORC1-type DNA replication protein 4">
    <location>
        <begin position="1"/>
        <end position="524"/>
    </location>
</feature>
<feature type="region of interest" description="Disordered" evidence="2">
    <location>
        <begin position="1"/>
        <end position="67"/>
    </location>
</feature>
<feature type="compositionally biased region" description="Polar residues" evidence="2">
    <location>
        <begin position="1"/>
        <end position="23"/>
    </location>
</feature>
<feature type="binding site" evidence="1">
    <location>
        <begin position="128"/>
        <end position="132"/>
    </location>
    <ligand>
        <name>ATP</name>
        <dbReference type="ChEBI" id="CHEBI:30616"/>
    </ligand>
</feature>
<feature type="binding site" evidence="1">
    <location>
        <position position="325"/>
    </location>
    <ligand>
        <name>ATP</name>
        <dbReference type="ChEBI" id="CHEBI:30616"/>
    </ligand>
</feature>
<feature type="binding site" evidence="1">
    <location>
        <position position="337"/>
    </location>
    <ligand>
        <name>ATP</name>
        <dbReference type="ChEBI" id="CHEBI:30616"/>
    </ligand>
</feature>
<protein>
    <recommendedName>
        <fullName evidence="1">ORC1-type DNA replication protein 4</fullName>
    </recommendedName>
</protein>
<comment type="function">
    <text evidence="1">Involved in regulation of DNA replication.</text>
</comment>
<comment type="similarity">
    <text evidence="1">Belongs to the CDC6/cdc18 family.</text>
</comment>
<accession>Q5UZ24</accession>
<proteinExistence type="inferred from homology"/>
<evidence type="ECO:0000255" key="1">
    <source>
        <dbReference type="HAMAP-Rule" id="MF_01407"/>
    </source>
</evidence>
<evidence type="ECO:0000256" key="2">
    <source>
        <dbReference type="SAM" id="MobiDB-lite"/>
    </source>
</evidence>
<name>CDC6D_HALMA</name>
<reference key="1">
    <citation type="journal article" date="2004" name="Genome Res.">
        <title>Genome sequence of Haloarcula marismortui: a halophilic archaeon from the Dead Sea.</title>
        <authorList>
            <person name="Baliga N.S."/>
            <person name="Bonneau R."/>
            <person name="Facciotti M.T."/>
            <person name="Pan M."/>
            <person name="Glusman G."/>
            <person name="Deutsch E.W."/>
            <person name="Shannon P."/>
            <person name="Chiu Y."/>
            <person name="Weng R.S."/>
            <person name="Gan R.R."/>
            <person name="Hung P."/>
            <person name="Date S.V."/>
            <person name="Marcotte E."/>
            <person name="Hood L."/>
            <person name="Ng W.V."/>
        </authorList>
    </citation>
    <scope>NUCLEOTIDE SEQUENCE [LARGE SCALE GENOMIC DNA]</scope>
    <source>
        <strain>ATCC 43049 / DSM 3752 / JCM 8966 / VKM B-1809</strain>
    </source>
</reference>
<dbReference type="EMBL" id="AY596297">
    <property type="protein sequence ID" value="AAV47479.1"/>
    <property type="molecule type" value="Genomic_DNA"/>
</dbReference>
<dbReference type="RefSeq" id="WP_011224383.1">
    <property type="nucleotide sequence ID" value="NC_006396.1"/>
</dbReference>
<dbReference type="SMR" id="Q5UZ24"/>
<dbReference type="STRING" id="272569.rrnAC2711"/>
<dbReference type="PaxDb" id="272569-rrnAC2711"/>
<dbReference type="EnsemblBacteria" id="AAV47479">
    <property type="protein sequence ID" value="AAV47479"/>
    <property type="gene ID" value="rrnAC2711"/>
</dbReference>
<dbReference type="GeneID" id="40153573"/>
<dbReference type="KEGG" id="hma:rrnAC2711"/>
<dbReference type="PATRIC" id="fig|272569.17.peg.3294"/>
<dbReference type="eggNOG" id="arCOG00467">
    <property type="taxonomic scope" value="Archaea"/>
</dbReference>
<dbReference type="HOGENOM" id="CLU_025112_3_1_2"/>
<dbReference type="Proteomes" id="UP000001169">
    <property type="component" value="Chromosome I"/>
</dbReference>
<dbReference type="GO" id="GO:0005524">
    <property type="term" value="F:ATP binding"/>
    <property type="evidence" value="ECO:0007669"/>
    <property type="project" value="UniProtKB-UniRule"/>
</dbReference>
<dbReference type="GO" id="GO:0016887">
    <property type="term" value="F:ATP hydrolysis activity"/>
    <property type="evidence" value="ECO:0007669"/>
    <property type="project" value="InterPro"/>
</dbReference>
<dbReference type="GO" id="GO:0006260">
    <property type="term" value="P:DNA replication"/>
    <property type="evidence" value="ECO:0007669"/>
    <property type="project" value="UniProtKB-UniRule"/>
</dbReference>
<dbReference type="CDD" id="cd08768">
    <property type="entry name" value="Cdc6_C"/>
    <property type="match status" value="1"/>
</dbReference>
<dbReference type="FunFam" id="1.10.10.10:FF:000502">
    <property type="entry name" value="ORC1-type DNA replication protein"/>
    <property type="match status" value="1"/>
</dbReference>
<dbReference type="FunFam" id="1.10.8.60:FF:000073">
    <property type="entry name" value="ORC1-type DNA replication protein"/>
    <property type="match status" value="1"/>
</dbReference>
<dbReference type="FunFam" id="3.40.50.300:FF:001519">
    <property type="entry name" value="ORC1-type DNA replication protein"/>
    <property type="match status" value="1"/>
</dbReference>
<dbReference type="Gene3D" id="1.10.8.60">
    <property type="match status" value="1"/>
</dbReference>
<dbReference type="Gene3D" id="3.40.50.300">
    <property type="entry name" value="P-loop containing nucleotide triphosphate hydrolases"/>
    <property type="match status" value="1"/>
</dbReference>
<dbReference type="Gene3D" id="1.10.10.10">
    <property type="entry name" value="Winged helix-like DNA-binding domain superfamily/Winged helix DNA-binding domain"/>
    <property type="match status" value="1"/>
</dbReference>
<dbReference type="HAMAP" id="MF_01407">
    <property type="entry name" value="ORC1_type_DNA_replic_protein"/>
    <property type="match status" value="1"/>
</dbReference>
<dbReference type="InterPro" id="IPR003593">
    <property type="entry name" value="AAA+_ATPase"/>
</dbReference>
<dbReference type="InterPro" id="IPR041664">
    <property type="entry name" value="AAA_16"/>
</dbReference>
<dbReference type="InterPro" id="IPR015163">
    <property type="entry name" value="Cdc6_C"/>
</dbReference>
<dbReference type="InterPro" id="IPR055237">
    <property type="entry name" value="Cdc6_lid"/>
</dbReference>
<dbReference type="InterPro" id="IPR050311">
    <property type="entry name" value="ORC1/CDC6"/>
</dbReference>
<dbReference type="InterPro" id="IPR014277">
    <property type="entry name" value="Orc1/Cdc6_arc"/>
</dbReference>
<dbReference type="InterPro" id="IPR027417">
    <property type="entry name" value="P-loop_NTPase"/>
</dbReference>
<dbReference type="InterPro" id="IPR036388">
    <property type="entry name" value="WH-like_DNA-bd_sf"/>
</dbReference>
<dbReference type="InterPro" id="IPR036390">
    <property type="entry name" value="WH_DNA-bd_sf"/>
</dbReference>
<dbReference type="NCBIfam" id="TIGR02928">
    <property type="entry name" value="orc1/cdc6 family replication initiation protein"/>
    <property type="match status" value="1"/>
</dbReference>
<dbReference type="PANTHER" id="PTHR10763">
    <property type="entry name" value="CELL DIVISION CONTROL PROTEIN 6-RELATED"/>
    <property type="match status" value="1"/>
</dbReference>
<dbReference type="PANTHER" id="PTHR10763:SF22">
    <property type="entry name" value="ORC1-TYPE DNA REPLICATION PROTEIN"/>
    <property type="match status" value="1"/>
</dbReference>
<dbReference type="Pfam" id="PF13191">
    <property type="entry name" value="AAA_16"/>
    <property type="match status" value="1"/>
</dbReference>
<dbReference type="Pfam" id="PF09079">
    <property type="entry name" value="Cdc6_C"/>
    <property type="match status" value="1"/>
</dbReference>
<dbReference type="Pfam" id="PF22703">
    <property type="entry name" value="Cdc6_lid"/>
    <property type="match status" value="1"/>
</dbReference>
<dbReference type="SMART" id="SM00382">
    <property type="entry name" value="AAA"/>
    <property type="match status" value="1"/>
</dbReference>
<dbReference type="SMART" id="SM01074">
    <property type="entry name" value="Cdc6_C"/>
    <property type="match status" value="1"/>
</dbReference>
<dbReference type="SUPFAM" id="SSF52540">
    <property type="entry name" value="P-loop containing nucleoside triphosphate hydrolases"/>
    <property type="match status" value="1"/>
</dbReference>
<dbReference type="SUPFAM" id="SSF46785">
    <property type="entry name" value="Winged helix' DNA-binding domain"/>
    <property type="match status" value="1"/>
</dbReference>